<reference key="1">
    <citation type="journal article" date="1999" name="Mol. Microbiol.">
        <title>Ambient pH signal transduction in Aspergillus: completion of gene characterization.</title>
        <authorList>
            <person name="Negrete-Urtasun S."/>
            <person name="Reiter W."/>
            <person name="Diez E."/>
            <person name="Denison S.H."/>
            <person name="Tilburn J."/>
            <person name="Espeso E.A."/>
            <person name="Penalva M.A."/>
            <person name="Arst H.N. Jr."/>
        </authorList>
    </citation>
    <scope>NUCLEOTIDE SEQUENCE [GENOMIC DNA]</scope>
</reference>
<reference key="2">
    <citation type="journal article" date="2005" name="Nature">
        <title>Sequencing of Aspergillus nidulans and comparative analysis with A. fumigatus and A. oryzae.</title>
        <authorList>
            <person name="Galagan J.E."/>
            <person name="Calvo S.E."/>
            <person name="Cuomo C."/>
            <person name="Ma L.-J."/>
            <person name="Wortman J.R."/>
            <person name="Batzoglou S."/>
            <person name="Lee S.-I."/>
            <person name="Bastuerkmen M."/>
            <person name="Spevak C.C."/>
            <person name="Clutterbuck J."/>
            <person name="Kapitonov V."/>
            <person name="Jurka J."/>
            <person name="Scazzocchio C."/>
            <person name="Farman M.L."/>
            <person name="Butler J."/>
            <person name="Purcell S."/>
            <person name="Harris S."/>
            <person name="Braus G.H."/>
            <person name="Draht O."/>
            <person name="Busch S."/>
            <person name="D'Enfert C."/>
            <person name="Bouchier C."/>
            <person name="Goldman G.H."/>
            <person name="Bell-Pedersen D."/>
            <person name="Griffiths-Jones S."/>
            <person name="Doonan J.H."/>
            <person name="Yu J."/>
            <person name="Vienken K."/>
            <person name="Pain A."/>
            <person name="Freitag M."/>
            <person name="Selker E.U."/>
            <person name="Archer D.B."/>
            <person name="Penalva M.A."/>
            <person name="Oakley B.R."/>
            <person name="Momany M."/>
            <person name="Tanaka T."/>
            <person name="Kumagai T."/>
            <person name="Asai K."/>
            <person name="Machida M."/>
            <person name="Nierman W.C."/>
            <person name="Denning D.W."/>
            <person name="Caddick M.X."/>
            <person name="Hynes M."/>
            <person name="Paoletti M."/>
            <person name="Fischer R."/>
            <person name="Miller B.L."/>
            <person name="Dyer P.S."/>
            <person name="Sachs M.S."/>
            <person name="Osmani S.A."/>
            <person name="Birren B.W."/>
        </authorList>
    </citation>
    <scope>NUCLEOTIDE SEQUENCE [LARGE SCALE GENOMIC DNA]</scope>
    <source>
        <strain>FGSC A4 / ATCC 38163 / CBS 112.46 / NRRL 194 / M139</strain>
    </source>
</reference>
<reference key="3">
    <citation type="journal article" date="2009" name="Fungal Genet. Biol.">
        <title>The 2008 update of the Aspergillus nidulans genome annotation: a community effort.</title>
        <authorList>
            <person name="Wortman J.R."/>
            <person name="Gilsenan J.M."/>
            <person name="Joardar V."/>
            <person name="Deegan J."/>
            <person name="Clutterbuck J."/>
            <person name="Andersen M.R."/>
            <person name="Archer D."/>
            <person name="Bencina M."/>
            <person name="Braus G."/>
            <person name="Coutinho P."/>
            <person name="von Dohren H."/>
            <person name="Doonan J."/>
            <person name="Driessen A.J."/>
            <person name="Durek P."/>
            <person name="Espeso E."/>
            <person name="Fekete E."/>
            <person name="Flipphi M."/>
            <person name="Estrada C.G."/>
            <person name="Geysens S."/>
            <person name="Goldman G."/>
            <person name="de Groot P.W."/>
            <person name="Hansen K."/>
            <person name="Harris S.D."/>
            <person name="Heinekamp T."/>
            <person name="Helmstaedt K."/>
            <person name="Henrissat B."/>
            <person name="Hofmann G."/>
            <person name="Homan T."/>
            <person name="Horio T."/>
            <person name="Horiuchi H."/>
            <person name="James S."/>
            <person name="Jones M."/>
            <person name="Karaffa L."/>
            <person name="Karanyi Z."/>
            <person name="Kato M."/>
            <person name="Keller N."/>
            <person name="Kelly D.E."/>
            <person name="Kiel J.A."/>
            <person name="Kim J.M."/>
            <person name="van der Klei I.J."/>
            <person name="Klis F.M."/>
            <person name="Kovalchuk A."/>
            <person name="Krasevec N."/>
            <person name="Kubicek C.P."/>
            <person name="Liu B."/>
            <person name="Maccabe A."/>
            <person name="Meyer V."/>
            <person name="Mirabito P."/>
            <person name="Miskei M."/>
            <person name="Mos M."/>
            <person name="Mullins J."/>
            <person name="Nelson D.R."/>
            <person name="Nielsen J."/>
            <person name="Oakley B.R."/>
            <person name="Osmani S.A."/>
            <person name="Pakula T."/>
            <person name="Paszewski A."/>
            <person name="Paulsen I."/>
            <person name="Pilsyk S."/>
            <person name="Pocsi I."/>
            <person name="Punt P.J."/>
            <person name="Ram A.F."/>
            <person name="Ren Q."/>
            <person name="Robellet X."/>
            <person name="Robson G."/>
            <person name="Seiboth B."/>
            <person name="van Solingen P."/>
            <person name="Specht T."/>
            <person name="Sun J."/>
            <person name="Taheri-Talesh N."/>
            <person name="Takeshita N."/>
            <person name="Ussery D."/>
            <person name="vanKuyk P.A."/>
            <person name="Visser H."/>
            <person name="van de Vondervoort P.J."/>
            <person name="de Vries R.P."/>
            <person name="Walton J."/>
            <person name="Xiang X."/>
            <person name="Xiong Y."/>
            <person name="Zeng A.P."/>
            <person name="Brandt B.W."/>
            <person name="Cornell M.J."/>
            <person name="van den Hondel C.A."/>
            <person name="Visser J."/>
            <person name="Oliver S.G."/>
            <person name="Turner G."/>
        </authorList>
    </citation>
    <scope>GENOME REANNOTATION</scope>
    <source>
        <strain>FGSC A4 / ATCC 38163 / CBS 112.46 / NRRL 194 / M139</strain>
    </source>
</reference>
<reference key="4">
    <citation type="journal article" date="1994" name="Mol. Gen. Genet.">
        <title>Two new genes involved in signalling ambient pH in Aspergillus nidulans.</title>
        <authorList>
            <person name="Arst H.N. Jr."/>
            <person name="Bignell E."/>
            <person name="Tilburn J."/>
        </authorList>
    </citation>
    <scope>FUNCTION</scope>
</reference>
<protein>
    <recommendedName>
        <fullName>pH-response regulator protein palH/RIM21</fullName>
    </recommendedName>
</protein>
<name>PALH_EMENI</name>
<proteinExistence type="inferred from homology"/>
<organism>
    <name type="scientific">Emericella nidulans (strain FGSC A4 / ATCC 38163 / CBS 112.46 / NRRL 194 / M139)</name>
    <name type="common">Aspergillus nidulans</name>
    <dbReference type="NCBI Taxonomy" id="227321"/>
    <lineage>
        <taxon>Eukaryota</taxon>
        <taxon>Fungi</taxon>
        <taxon>Dikarya</taxon>
        <taxon>Ascomycota</taxon>
        <taxon>Pezizomycotina</taxon>
        <taxon>Eurotiomycetes</taxon>
        <taxon>Eurotiomycetidae</taxon>
        <taxon>Eurotiales</taxon>
        <taxon>Aspergillaceae</taxon>
        <taxon>Aspergillus</taxon>
        <taxon>Aspergillus subgen. Nidulantes</taxon>
    </lineage>
</organism>
<feature type="chain" id="PRO_0000058200" description="pH-response regulator protein palH/RIM21">
    <location>
        <begin position="1"/>
        <end position="760"/>
    </location>
</feature>
<feature type="topological domain" description="Extracellular" evidence="1">
    <location>
        <begin position="1"/>
        <end position="85"/>
    </location>
</feature>
<feature type="transmembrane region" description="Helical" evidence="1">
    <location>
        <begin position="86"/>
        <end position="106"/>
    </location>
</feature>
<feature type="topological domain" description="Cytoplasmic" evidence="1">
    <location>
        <begin position="107"/>
        <end position="150"/>
    </location>
</feature>
<feature type="transmembrane region" description="Helical" evidence="1">
    <location>
        <begin position="151"/>
        <end position="171"/>
    </location>
</feature>
<feature type="topological domain" description="Extracellular" evidence="1">
    <location>
        <begin position="172"/>
        <end position="194"/>
    </location>
</feature>
<feature type="transmembrane region" description="Helical" evidence="1">
    <location>
        <begin position="195"/>
        <end position="215"/>
    </location>
</feature>
<feature type="topological domain" description="Cytoplasmic" evidence="1">
    <location>
        <begin position="216"/>
        <end position="228"/>
    </location>
</feature>
<feature type="transmembrane region" description="Helical" evidence="1">
    <location>
        <begin position="229"/>
        <end position="249"/>
    </location>
</feature>
<feature type="topological domain" description="Extracellular" evidence="1">
    <location>
        <begin position="250"/>
        <end position="262"/>
    </location>
</feature>
<feature type="transmembrane region" description="Helical" evidence="1">
    <location>
        <begin position="263"/>
        <end position="283"/>
    </location>
</feature>
<feature type="topological domain" description="Cytoplasmic" evidence="1">
    <location>
        <begin position="284"/>
        <end position="301"/>
    </location>
</feature>
<feature type="transmembrane region" description="Helical" evidence="1">
    <location>
        <begin position="302"/>
        <end position="322"/>
    </location>
</feature>
<feature type="topological domain" description="Extracellular" evidence="1">
    <location>
        <begin position="323"/>
        <end position="328"/>
    </location>
</feature>
<feature type="transmembrane region" description="Helical" evidence="1">
    <location>
        <begin position="329"/>
        <end position="349"/>
    </location>
</feature>
<feature type="topological domain" description="Cytoplasmic" evidence="1">
    <location>
        <begin position="350"/>
        <end position="760"/>
    </location>
</feature>
<feature type="region of interest" description="Disordered" evidence="2">
    <location>
        <begin position="389"/>
        <end position="465"/>
    </location>
</feature>
<feature type="region of interest" description="Disordered" evidence="2">
    <location>
        <begin position="479"/>
        <end position="503"/>
    </location>
</feature>
<feature type="region of interest" description="Disordered" evidence="2">
    <location>
        <begin position="559"/>
        <end position="615"/>
    </location>
</feature>
<feature type="region of interest" description="Disordered" evidence="2">
    <location>
        <begin position="629"/>
        <end position="666"/>
    </location>
</feature>
<feature type="region of interest" description="Disordered" evidence="2">
    <location>
        <begin position="696"/>
        <end position="760"/>
    </location>
</feature>
<feature type="compositionally biased region" description="Acidic residues" evidence="2">
    <location>
        <begin position="492"/>
        <end position="501"/>
    </location>
</feature>
<feature type="compositionally biased region" description="Basic and acidic residues" evidence="2">
    <location>
        <begin position="575"/>
        <end position="585"/>
    </location>
</feature>
<feature type="compositionally biased region" description="Polar residues" evidence="2">
    <location>
        <begin position="629"/>
        <end position="642"/>
    </location>
</feature>
<dbReference type="EMBL" id="AF152926">
    <property type="protein sequence ID" value="AAF70858.1"/>
    <property type="molecule type" value="Genomic_DNA"/>
</dbReference>
<dbReference type="EMBL" id="AACD01000113">
    <property type="protein sequence ID" value="EAA58285.1"/>
    <property type="molecule type" value="Genomic_DNA"/>
</dbReference>
<dbReference type="EMBL" id="BN001301">
    <property type="protein sequence ID" value="CBF71663.1"/>
    <property type="molecule type" value="Genomic_DNA"/>
</dbReference>
<dbReference type="RefSeq" id="XP_664490.1">
    <property type="nucleotide sequence ID" value="XM_659398.1"/>
</dbReference>
<dbReference type="STRING" id="227321.Q9P904"/>
<dbReference type="TCDB" id="9.B.213.1.2">
    <property type="family name" value="the 7 tms ph sensor rim21/palh (rim21/palh) family"/>
</dbReference>
<dbReference type="EnsemblFungi" id="CBF71663">
    <property type="protein sequence ID" value="CBF71663"/>
    <property type="gene ID" value="ANIA_06886"/>
</dbReference>
<dbReference type="KEGG" id="ani:ANIA_06886"/>
<dbReference type="VEuPathDB" id="FungiDB:AN6886"/>
<dbReference type="eggNOG" id="ENOG502QWMT">
    <property type="taxonomic scope" value="Eukaryota"/>
</dbReference>
<dbReference type="HOGENOM" id="CLU_014594_1_0_1"/>
<dbReference type="InParanoid" id="Q9P904"/>
<dbReference type="OMA" id="PRQIWAN"/>
<dbReference type="OrthoDB" id="5393256at2759"/>
<dbReference type="Proteomes" id="UP000000560">
    <property type="component" value="Chromosome I"/>
</dbReference>
<dbReference type="GO" id="GO:0005886">
    <property type="term" value="C:plasma membrane"/>
    <property type="evidence" value="ECO:0000314"/>
    <property type="project" value="AspGD"/>
</dbReference>
<dbReference type="GO" id="GO:0071467">
    <property type="term" value="P:cellular response to pH"/>
    <property type="evidence" value="ECO:0000315"/>
    <property type="project" value="AspGD"/>
</dbReference>
<dbReference type="InterPro" id="IPR014844">
    <property type="entry name" value="PalH"/>
</dbReference>
<dbReference type="PANTHER" id="PTHR35779">
    <property type="entry name" value="PH-RESPONSE REGULATOR PROTEIN PALH/RIM21"/>
    <property type="match status" value="1"/>
</dbReference>
<dbReference type="PANTHER" id="PTHR35779:SF1">
    <property type="entry name" value="PH-RESPONSE REGULATOR PROTEIN PALH_RIM21"/>
    <property type="match status" value="1"/>
</dbReference>
<dbReference type="Pfam" id="PF08733">
    <property type="entry name" value="PalH"/>
    <property type="match status" value="1"/>
</dbReference>
<sequence>MEDDGRLAPRQIWARPTSTTTRSYVPGCTPFLLPSDGYVYLNRTYSISLGENAIYDPACTSTPTTTEHAGAALDIHDPFYASVTPLLYAMGCATVVSYLLVIILLITPRTFYVGGPGGGANFLGRHGMVSGSYSNNSSVVGVGGRPWLQKVAALLVAISLTIATADSFRVAEKQYDHGYSDAEALTSEVIDGTEIKVVRIISSTFLWLAQVQTLIRLFPRHKEKVMIKWAGFALIVLDTIFAILDKFLVKTNTTRPRLYEDAIPALSYLFELALNLLYAAWVIFYSLSKHRFAFFHPKMRNICLVALLSLCAVLIPVVFFVLDIAKPEIAGWGTYIRWVGSAAASVVVWEWVERIEALERDERKDGILGREVFDGDEMIEVTPSEEVDWPRQQFHGHDRGGGTGMSSAWGGVMGLAHRPLRPRGGRITQTQREAEGATAAKSRKRRSARPTPPPAAVTPVSRADTTSAASTVYNVHYYPVSSPTPPVAMPFMEEEDEGSDGDGEKELAVVQNQQSSLPTQDTYTEPRRQNSPQIVNVDNRWRFILNPFKNRHAALPREVASAQAEEEGFLSPDDQAPRQGDEENPHYTPRHRGLFSFHPMSDGASRRQSGADQPLPVTVIPARRRGQDTWSPQWFTNSNLVDRSSSRRTASRPRDQRMKVIQPQVQSAAPWTAADMEASFSSMDYELRYDPEAAALVSEDIPDHHSQPTQADSPAHPTMSGGNGPSGGETQSALDTGPGIEGSVNEGSVIEGPEESHSQR</sequence>
<accession>Q9P904</accession>
<accession>C8V2R4</accession>
<accession>Q5AXU4</accession>
<keyword id="KW-1003">Cell membrane</keyword>
<keyword id="KW-0472">Membrane</keyword>
<keyword id="KW-1185">Reference proteome</keyword>
<keyword id="KW-0812">Transmembrane</keyword>
<keyword id="KW-1133">Transmembrane helix</keyword>
<comment type="function">
    <text evidence="3">Required for the proteolytic cleavage of the transcription factor pacC in response to alkaline ambient pH. Might be a pH sensor.</text>
</comment>
<comment type="subcellular location">
    <subcellularLocation>
        <location>Cell membrane</location>
        <topology>Multi-pass membrane protein</topology>
    </subcellularLocation>
</comment>
<comment type="similarity">
    <text evidence="4">Belongs to the palH/RIM21 family.</text>
</comment>
<evidence type="ECO:0000255" key="1"/>
<evidence type="ECO:0000256" key="2">
    <source>
        <dbReference type="SAM" id="MobiDB-lite"/>
    </source>
</evidence>
<evidence type="ECO:0000269" key="3">
    <source>
    </source>
</evidence>
<evidence type="ECO:0000305" key="4"/>
<gene>
    <name type="primary">palH</name>
    <name type="ORF">AN6886</name>
</gene>